<proteinExistence type="evidence at protein level"/>
<dbReference type="EMBL" id="U83231">
    <property type="protein sequence ID" value="AAC53391.1"/>
    <property type="molecule type" value="mRNA"/>
</dbReference>
<dbReference type="EMBL" id="U83230">
    <property type="protein sequence ID" value="AAC53390.1"/>
    <property type="molecule type" value="mRNA"/>
</dbReference>
<dbReference type="PIR" id="T41751">
    <property type="entry name" value="T41751"/>
</dbReference>
<dbReference type="PIR" id="T42092">
    <property type="entry name" value="T42092"/>
</dbReference>
<dbReference type="RefSeq" id="NP_037349.1">
    <molecule id="O35889-1"/>
    <property type="nucleotide sequence ID" value="NM_013217.3"/>
</dbReference>
<dbReference type="BMRB" id="O35889"/>
<dbReference type="SMR" id="O35889"/>
<dbReference type="BioGRID" id="247803">
    <property type="interactions" value="2"/>
</dbReference>
<dbReference type="ELM" id="O35889"/>
<dbReference type="FunCoup" id="O35889">
    <property type="interactions" value="2064"/>
</dbReference>
<dbReference type="IntAct" id="O35889">
    <property type="interactions" value="15"/>
</dbReference>
<dbReference type="MINT" id="O35889"/>
<dbReference type="STRING" id="10116.ENSRNOP00000029044"/>
<dbReference type="GlyGen" id="O35889">
    <property type="glycosylation" value="2 sites"/>
</dbReference>
<dbReference type="iPTMnet" id="O35889"/>
<dbReference type="PhosphoSitePlus" id="O35889"/>
<dbReference type="jPOST" id="O35889"/>
<dbReference type="PaxDb" id="10116-ENSRNOP00000029044"/>
<dbReference type="Ensembl" id="ENSRNOT00000106034.1">
    <molecule id="O35889-1"/>
    <property type="protein sequence ID" value="ENSRNOP00000088861.1"/>
    <property type="gene ID" value="ENSRNOG00000023753.8"/>
</dbReference>
<dbReference type="GeneID" id="26955"/>
<dbReference type="KEGG" id="rno:26955"/>
<dbReference type="AGR" id="RGD:708561"/>
<dbReference type="CTD" id="4301"/>
<dbReference type="RGD" id="708561">
    <property type="gene designation" value="Afdn"/>
</dbReference>
<dbReference type="eggNOG" id="KOG1892">
    <property type="taxonomic scope" value="Eukaryota"/>
</dbReference>
<dbReference type="GeneTree" id="ENSGT00940000155237"/>
<dbReference type="InParanoid" id="O35889"/>
<dbReference type="OrthoDB" id="61193at9989"/>
<dbReference type="PhylomeDB" id="O35889"/>
<dbReference type="Reactome" id="R-RNO-418990">
    <property type="pathway name" value="Adherens junctions interactions"/>
</dbReference>
<dbReference type="PRO" id="PR:O35889"/>
<dbReference type="Proteomes" id="UP000002494">
    <property type="component" value="Chromosome 1"/>
</dbReference>
<dbReference type="GO" id="GO:0005912">
    <property type="term" value="C:adherens junction"/>
    <property type="evidence" value="ECO:0000314"/>
    <property type="project" value="RGD"/>
</dbReference>
<dbReference type="GO" id="GO:0043296">
    <property type="term" value="C:apical junction complex"/>
    <property type="evidence" value="ECO:0000266"/>
    <property type="project" value="RGD"/>
</dbReference>
<dbReference type="GO" id="GO:0045177">
    <property type="term" value="C:apical part of cell"/>
    <property type="evidence" value="ECO:0000266"/>
    <property type="project" value="RGD"/>
</dbReference>
<dbReference type="GO" id="GO:0030424">
    <property type="term" value="C:axon"/>
    <property type="evidence" value="ECO:0000314"/>
    <property type="project" value="RGD"/>
</dbReference>
<dbReference type="GO" id="GO:0030054">
    <property type="term" value="C:cell junction"/>
    <property type="evidence" value="ECO:0000266"/>
    <property type="project" value="RGD"/>
</dbReference>
<dbReference type="GO" id="GO:0044291">
    <property type="term" value="C:cell-cell contact zone"/>
    <property type="evidence" value="ECO:0000266"/>
    <property type="project" value="RGD"/>
</dbReference>
<dbReference type="GO" id="GO:0005911">
    <property type="term" value="C:cell-cell junction"/>
    <property type="evidence" value="ECO:0000266"/>
    <property type="project" value="RGD"/>
</dbReference>
<dbReference type="GO" id="GO:0005737">
    <property type="term" value="C:cytoplasm"/>
    <property type="evidence" value="ECO:0000266"/>
    <property type="project" value="RGD"/>
</dbReference>
<dbReference type="GO" id="GO:0005829">
    <property type="term" value="C:cytosol"/>
    <property type="evidence" value="ECO:0000304"/>
    <property type="project" value="Reactome"/>
</dbReference>
<dbReference type="GO" id="GO:0060076">
    <property type="term" value="C:excitatory synapse"/>
    <property type="evidence" value="ECO:0000314"/>
    <property type="project" value="RGD"/>
</dbReference>
<dbReference type="GO" id="GO:0098978">
    <property type="term" value="C:glutamatergic synapse"/>
    <property type="evidence" value="ECO:0000314"/>
    <property type="project" value="SynGO"/>
</dbReference>
<dbReference type="GO" id="GO:0098686">
    <property type="term" value="C:hippocampal mossy fiber to CA3 synapse"/>
    <property type="evidence" value="ECO:0000266"/>
    <property type="project" value="RGD"/>
</dbReference>
<dbReference type="GO" id="GO:0046930">
    <property type="term" value="C:pore complex"/>
    <property type="evidence" value="ECO:0000266"/>
    <property type="project" value="RGD"/>
</dbReference>
<dbReference type="GO" id="GO:0098839">
    <property type="term" value="C:postsynaptic density membrane"/>
    <property type="evidence" value="ECO:0000266"/>
    <property type="project" value="RGD"/>
</dbReference>
<dbReference type="GO" id="GO:0048787">
    <property type="term" value="C:presynaptic active zone membrane"/>
    <property type="evidence" value="ECO:0000266"/>
    <property type="project" value="RGD"/>
</dbReference>
<dbReference type="GO" id="GO:0036477">
    <property type="term" value="C:somatodendritic compartment"/>
    <property type="evidence" value="ECO:0000314"/>
    <property type="project" value="RGD"/>
</dbReference>
<dbReference type="GO" id="GO:0070160">
    <property type="term" value="C:tight junction"/>
    <property type="evidence" value="ECO:0000266"/>
    <property type="project" value="RGD"/>
</dbReference>
<dbReference type="GO" id="GO:0051015">
    <property type="term" value="F:actin filament binding"/>
    <property type="evidence" value="ECO:0000266"/>
    <property type="project" value="RGD"/>
</dbReference>
<dbReference type="GO" id="GO:0050839">
    <property type="term" value="F:cell adhesion molecule binding"/>
    <property type="evidence" value="ECO:0000266"/>
    <property type="project" value="RGD"/>
</dbReference>
<dbReference type="GO" id="GO:0030274">
    <property type="term" value="F:LIM domain binding"/>
    <property type="evidence" value="ECO:0000353"/>
    <property type="project" value="RGD"/>
</dbReference>
<dbReference type="GO" id="GO:0031267">
    <property type="term" value="F:small GTPase binding"/>
    <property type="evidence" value="ECO:0000266"/>
    <property type="project" value="RGD"/>
</dbReference>
<dbReference type="GO" id="GO:0034334">
    <property type="term" value="P:adherens junction maintenance"/>
    <property type="evidence" value="ECO:0000266"/>
    <property type="project" value="RGD"/>
</dbReference>
<dbReference type="GO" id="GO:0070830">
    <property type="term" value="P:bicellular tight junction assembly"/>
    <property type="evidence" value="ECO:0000266"/>
    <property type="project" value="RGD"/>
</dbReference>
<dbReference type="GO" id="GO:0048854">
    <property type="term" value="P:brain morphogenesis"/>
    <property type="evidence" value="ECO:0000266"/>
    <property type="project" value="RGD"/>
</dbReference>
<dbReference type="GO" id="GO:0044331">
    <property type="term" value="P:cell-cell adhesion mediated by cadherin"/>
    <property type="evidence" value="ECO:0000266"/>
    <property type="project" value="RGD"/>
</dbReference>
<dbReference type="GO" id="GO:0021987">
    <property type="term" value="P:cerebral cortex development"/>
    <property type="evidence" value="ECO:0000266"/>
    <property type="project" value="RGD"/>
</dbReference>
<dbReference type="GO" id="GO:0140059">
    <property type="term" value="P:dendrite arborization"/>
    <property type="evidence" value="ECO:0000315"/>
    <property type="project" value="RGD"/>
</dbReference>
<dbReference type="GO" id="GO:0090557">
    <property type="term" value="P:establishment of endothelial intestinal barrier"/>
    <property type="evidence" value="ECO:0000266"/>
    <property type="project" value="RGD"/>
</dbReference>
<dbReference type="GO" id="GO:0061951">
    <property type="term" value="P:establishment of protein localization to plasma membrane"/>
    <property type="evidence" value="ECO:0000266"/>
    <property type="project" value="RGD"/>
</dbReference>
<dbReference type="GO" id="GO:0048872">
    <property type="term" value="P:homeostasis of number of cells"/>
    <property type="evidence" value="ECO:0000266"/>
    <property type="project" value="RGD"/>
</dbReference>
<dbReference type="GO" id="GO:0030336">
    <property type="term" value="P:negative regulation of cell migration"/>
    <property type="evidence" value="ECO:0000266"/>
    <property type="project" value="RGD"/>
</dbReference>
<dbReference type="GO" id="GO:0060563">
    <property type="term" value="P:neuroepithelial cell differentiation"/>
    <property type="evidence" value="ECO:0000266"/>
    <property type="project" value="RGD"/>
</dbReference>
<dbReference type="GO" id="GO:0046931">
    <property type="term" value="P:pore complex assembly"/>
    <property type="evidence" value="ECO:0000266"/>
    <property type="project" value="RGD"/>
</dbReference>
<dbReference type="GO" id="GO:0022409">
    <property type="term" value="P:positive regulation of cell-cell adhesion"/>
    <property type="evidence" value="ECO:0000266"/>
    <property type="project" value="RGD"/>
</dbReference>
<dbReference type="GO" id="GO:2000049">
    <property type="term" value="P:positive regulation of cell-cell adhesion mediated by cadherin"/>
    <property type="evidence" value="ECO:0000266"/>
    <property type="project" value="RGD"/>
</dbReference>
<dbReference type="GO" id="GO:1903861">
    <property type="term" value="P:positive regulation of dendrite extension"/>
    <property type="evidence" value="ECO:0000315"/>
    <property type="project" value="RGD"/>
</dbReference>
<dbReference type="GO" id="GO:0050775">
    <property type="term" value="P:positive regulation of dendrite morphogenesis"/>
    <property type="evidence" value="ECO:0000315"/>
    <property type="project" value="RGD"/>
</dbReference>
<dbReference type="GO" id="GO:0061003">
    <property type="term" value="P:positive regulation of dendritic spine morphogenesis"/>
    <property type="evidence" value="ECO:0000315"/>
    <property type="project" value="RGD"/>
</dbReference>
<dbReference type="GO" id="GO:0010628">
    <property type="term" value="P:positive regulation of gene expression"/>
    <property type="evidence" value="ECO:0000266"/>
    <property type="project" value="RGD"/>
</dbReference>
<dbReference type="GO" id="GO:0061885">
    <property type="term" value="P:positive regulation of mini excitatory postsynaptic potential"/>
    <property type="evidence" value="ECO:0000315"/>
    <property type="project" value="RGD"/>
</dbReference>
<dbReference type="GO" id="GO:0099084">
    <property type="term" value="P:postsynaptic specialization organization"/>
    <property type="evidence" value="ECO:0000314"/>
    <property type="project" value="SynGO"/>
</dbReference>
<dbReference type="GO" id="GO:1902414">
    <property type="term" value="P:protein localization to cell junction"/>
    <property type="evidence" value="ECO:0000266"/>
    <property type="project" value="RGD"/>
</dbReference>
<dbReference type="GO" id="GO:0060019">
    <property type="term" value="P:radial glial cell differentiation"/>
    <property type="evidence" value="ECO:0000266"/>
    <property type="project" value="RGD"/>
</dbReference>
<dbReference type="GO" id="GO:0070445">
    <property type="term" value="P:regulation of oligodendrocyte progenitor proliferation"/>
    <property type="evidence" value="ECO:0000266"/>
    <property type="project" value="RGD"/>
</dbReference>
<dbReference type="GO" id="GO:0150052">
    <property type="term" value="P:regulation of postsynapse assembly"/>
    <property type="evidence" value="ECO:0000266"/>
    <property type="project" value="RGD"/>
</dbReference>
<dbReference type="GO" id="GO:0032880">
    <property type="term" value="P:regulation of protein localization"/>
    <property type="evidence" value="ECO:0000318"/>
    <property type="project" value="GO_Central"/>
</dbReference>
<dbReference type="GO" id="GO:0007165">
    <property type="term" value="P:signal transduction"/>
    <property type="evidence" value="ECO:0007669"/>
    <property type="project" value="InterPro"/>
</dbReference>
<dbReference type="GO" id="GO:0021537">
    <property type="term" value="P:telencephalon development"/>
    <property type="evidence" value="ECO:0000266"/>
    <property type="project" value="RGD"/>
</dbReference>
<dbReference type="CDD" id="cd22711">
    <property type="entry name" value="FHA_AFDN"/>
    <property type="match status" value="1"/>
</dbReference>
<dbReference type="CDD" id="cd15471">
    <property type="entry name" value="Myo5p-like_CBD_afadin"/>
    <property type="match status" value="1"/>
</dbReference>
<dbReference type="CDD" id="cd06789">
    <property type="entry name" value="PDZ_AFDN-like"/>
    <property type="match status" value="1"/>
</dbReference>
<dbReference type="CDD" id="cd01782">
    <property type="entry name" value="RA1_Afadin"/>
    <property type="match status" value="1"/>
</dbReference>
<dbReference type="CDD" id="cd01781">
    <property type="entry name" value="RA2_Afadin"/>
    <property type="match status" value="1"/>
</dbReference>
<dbReference type="CDD" id="cd22265">
    <property type="entry name" value="UDM1_RNF168"/>
    <property type="match status" value="1"/>
</dbReference>
<dbReference type="FunFam" id="2.30.42.10:FF:000032">
    <property type="entry name" value="Afadin isoform A"/>
    <property type="match status" value="1"/>
</dbReference>
<dbReference type="FunFam" id="3.10.20.90:FF:000033">
    <property type="entry name" value="afadin isoform X1"/>
    <property type="match status" value="1"/>
</dbReference>
<dbReference type="FunFam" id="2.60.200.20:FF:000006">
    <property type="entry name" value="Afadin, adherens junction formation factor"/>
    <property type="match status" value="1"/>
</dbReference>
<dbReference type="FunFam" id="3.10.20.90:FF:000025">
    <property type="entry name" value="Afadin, adherens junction formation factor"/>
    <property type="match status" value="1"/>
</dbReference>
<dbReference type="Gene3D" id="2.30.42.10">
    <property type="match status" value="1"/>
</dbReference>
<dbReference type="Gene3D" id="2.60.200.20">
    <property type="match status" value="1"/>
</dbReference>
<dbReference type="Gene3D" id="3.10.20.90">
    <property type="entry name" value="Phosphatidylinositol 3-kinase Catalytic Subunit, Chain A, domain 1"/>
    <property type="match status" value="2"/>
</dbReference>
<dbReference type="InterPro" id="IPR028842">
    <property type="entry name" value="Afadin"/>
</dbReference>
<dbReference type="InterPro" id="IPR037977">
    <property type="entry name" value="CBD_Afadin"/>
</dbReference>
<dbReference type="InterPro" id="IPR002710">
    <property type="entry name" value="Dilute_dom"/>
</dbReference>
<dbReference type="InterPro" id="IPR000253">
    <property type="entry name" value="FHA_dom"/>
</dbReference>
<dbReference type="InterPro" id="IPR001478">
    <property type="entry name" value="PDZ"/>
</dbReference>
<dbReference type="InterPro" id="IPR036034">
    <property type="entry name" value="PDZ_sf"/>
</dbReference>
<dbReference type="InterPro" id="IPR000159">
    <property type="entry name" value="RA_dom"/>
</dbReference>
<dbReference type="InterPro" id="IPR008984">
    <property type="entry name" value="SMAD_FHA_dom_sf"/>
</dbReference>
<dbReference type="InterPro" id="IPR029071">
    <property type="entry name" value="Ubiquitin-like_domsf"/>
</dbReference>
<dbReference type="PANTHER" id="PTHR10398">
    <property type="entry name" value="AFADIN"/>
    <property type="match status" value="1"/>
</dbReference>
<dbReference type="PANTHER" id="PTHR10398:SF2">
    <property type="entry name" value="AFADIN"/>
    <property type="match status" value="1"/>
</dbReference>
<dbReference type="Pfam" id="PF01843">
    <property type="entry name" value="DIL"/>
    <property type="match status" value="1"/>
</dbReference>
<dbReference type="Pfam" id="PF00498">
    <property type="entry name" value="FHA"/>
    <property type="match status" value="1"/>
</dbReference>
<dbReference type="Pfam" id="PF00595">
    <property type="entry name" value="PDZ"/>
    <property type="match status" value="1"/>
</dbReference>
<dbReference type="Pfam" id="PF00788">
    <property type="entry name" value="RA"/>
    <property type="match status" value="2"/>
</dbReference>
<dbReference type="SMART" id="SM01132">
    <property type="entry name" value="DIL"/>
    <property type="match status" value="1"/>
</dbReference>
<dbReference type="SMART" id="SM00240">
    <property type="entry name" value="FHA"/>
    <property type="match status" value="1"/>
</dbReference>
<dbReference type="SMART" id="SM00228">
    <property type="entry name" value="PDZ"/>
    <property type="match status" value="1"/>
</dbReference>
<dbReference type="SMART" id="SM00314">
    <property type="entry name" value="RA"/>
    <property type="match status" value="2"/>
</dbReference>
<dbReference type="SUPFAM" id="SSF50156">
    <property type="entry name" value="PDZ domain-like"/>
    <property type="match status" value="1"/>
</dbReference>
<dbReference type="SUPFAM" id="SSF49879">
    <property type="entry name" value="SMAD/FHA domain"/>
    <property type="match status" value="1"/>
</dbReference>
<dbReference type="SUPFAM" id="SSF54236">
    <property type="entry name" value="Ubiquitin-like"/>
    <property type="match status" value="2"/>
</dbReference>
<dbReference type="PROSITE" id="PS51126">
    <property type="entry name" value="DILUTE"/>
    <property type="match status" value="1"/>
</dbReference>
<dbReference type="PROSITE" id="PS50106">
    <property type="entry name" value="PDZ"/>
    <property type="match status" value="1"/>
</dbReference>
<dbReference type="PROSITE" id="PS50200">
    <property type="entry name" value="RA"/>
    <property type="match status" value="2"/>
</dbReference>
<keyword id="KW-0007">Acetylation</keyword>
<keyword id="KW-0025">Alternative splicing</keyword>
<keyword id="KW-0130">Cell adhesion</keyword>
<keyword id="KW-0965">Cell junction</keyword>
<keyword id="KW-0175">Coiled coil</keyword>
<keyword id="KW-0903">Direct protein sequencing</keyword>
<keyword id="KW-0597">Phosphoprotein</keyword>
<keyword id="KW-1185">Reference proteome</keyword>
<keyword id="KW-0677">Repeat</keyword>
<organism>
    <name type="scientific">Rattus norvegicus</name>
    <name type="common">Rat</name>
    <dbReference type="NCBI Taxonomy" id="10116"/>
    <lineage>
        <taxon>Eukaryota</taxon>
        <taxon>Metazoa</taxon>
        <taxon>Chordata</taxon>
        <taxon>Craniata</taxon>
        <taxon>Vertebrata</taxon>
        <taxon>Euteleostomi</taxon>
        <taxon>Mammalia</taxon>
        <taxon>Eutheria</taxon>
        <taxon>Euarchontoglires</taxon>
        <taxon>Glires</taxon>
        <taxon>Rodentia</taxon>
        <taxon>Myomorpha</taxon>
        <taxon>Muroidea</taxon>
        <taxon>Muridae</taxon>
        <taxon>Murinae</taxon>
        <taxon>Rattus</taxon>
    </lineage>
</organism>
<accession>O35889</accession>
<accession>O35890</accession>
<reference key="1">
    <citation type="journal article" date="1997" name="J. Cell Biol.">
        <title>Afadin: a novel actin filament-binding protein with one PDZ domain localized at cadherin-based cell-to-cell adherens junction.</title>
        <authorList>
            <person name="Mandai K."/>
            <person name="Nakanishi H."/>
            <person name="Satoh A."/>
            <person name="Obaishi H."/>
            <person name="Wada M."/>
            <person name="Nishioka H."/>
            <person name="Itoh M."/>
            <person name="Mizoguchi A."/>
            <person name="Aoki T."/>
            <person name="Fujimoto T."/>
            <person name="Matsuda Y."/>
            <person name="Tsukita S."/>
            <person name="Takai Y."/>
        </authorList>
    </citation>
    <scope>NUCLEOTIDE SEQUENCE [MRNA] (ISOFORMS 1 AND 2)</scope>
    <scope>PARTIAL PROTEIN SEQUENCE</scope>
    <scope>FUNCTION</scope>
    <scope>SUBCELLULAR LOCATION</scope>
    <scope>TISSUE SPECIFICITY</scope>
    <scope>INTERACTION WITH F-ACTIN</scope>
    <source>
        <tissue>Brain</tissue>
    </source>
</reference>
<reference key="2">
    <citation type="journal article" date="2012" name="Nat. Commun.">
        <title>Quantitative maps of protein phosphorylation sites across 14 different rat organs and tissues.</title>
        <authorList>
            <person name="Lundby A."/>
            <person name="Secher A."/>
            <person name="Lage K."/>
            <person name="Nordsborg N.B."/>
            <person name="Dmytriyev A."/>
            <person name="Lundby C."/>
            <person name="Olsen J.V."/>
        </authorList>
    </citation>
    <scope>PHOSPHORYLATION [LARGE SCALE ANALYSIS] AT SER-391; SER-512; SER-1090; SER-1114; SER-1147; SER-1150; SER-1189; SER-1282; SER-1506; SER-1517; SER-1726; SER-1779 AND SER-1804</scope>
    <scope>IDENTIFICATION BY MASS SPECTROMETRY [LARGE SCALE ANALYSIS]</scope>
</reference>
<reference key="3">
    <citation type="journal article" date="2018" name="Cell Rep.">
        <title>A Dock-and-Lock Mechanism Clusters ADAM10 at Cell-Cell Junctions to Promote alpha-Toxin Cytotoxicity.</title>
        <authorList>
            <person name="Shah J."/>
            <person name="Rouaud F."/>
            <person name="Guerrera D."/>
            <person name="Vasileva E."/>
            <person name="Popov L.M."/>
            <person name="Kelley W.L."/>
            <person name="Rubinstein E."/>
            <person name="Carette J.E."/>
            <person name="Amieva M.R."/>
            <person name="Citi S."/>
        </authorList>
    </citation>
    <scope>INTERACTION WITH ADAM10</scope>
</reference>
<protein>
    <recommendedName>
        <fullName>Afadin</fullName>
    </recommendedName>
    <alternativeName>
        <fullName evidence="12">Afadin adherens junction formation factor</fullName>
    </alternativeName>
    <alternativeName>
        <fullName>Protein Af-6</fullName>
    </alternativeName>
</protein>
<name>AFAD_RAT</name>
<feature type="chain" id="PRO_0000215920" description="Afadin">
    <location>
        <begin position="1"/>
        <end position="1829"/>
    </location>
</feature>
<feature type="domain" description="Ras-associating 1" evidence="6">
    <location>
        <begin position="39"/>
        <end position="133"/>
    </location>
</feature>
<feature type="domain" description="Ras-associating 2" evidence="6">
    <location>
        <begin position="246"/>
        <end position="348"/>
    </location>
</feature>
<feature type="domain" description="FHA">
    <location>
        <begin position="441"/>
        <end position="507"/>
    </location>
</feature>
<feature type="domain" description="Dilute" evidence="7">
    <location>
        <begin position="668"/>
        <end position="915"/>
    </location>
</feature>
<feature type="domain" description="PDZ" evidence="5">
    <location>
        <begin position="1014"/>
        <end position="1100"/>
    </location>
</feature>
<feature type="region of interest" description="Disordered" evidence="8">
    <location>
        <begin position="129"/>
        <end position="196"/>
    </location>
</feature>
<feature type="region of interest" description="Disordered" evidence="8">
    <location>
        <begin position="356"/>
        <end position="377"/>
    </location>
</feature>
<feature type="region of interest" description="Disordered" evidence="8">
    <location>
        <begin position="539"/>
        <end position="595"/>
    </location>
</feature>
<feature type="region of interest" description="Disordered" evidence="8">
    <location>
        <begin position="1114"/>
        <end position="1230"/>
    </location>
</feature>
<feature type="region of interest" description="Disordered" evidence="8">
    <location>
        <begin position="1300"/>
        <end position="1533"/>
    </location>
</feature>
<feature type="region of interest" description="Disordered" evidence="8">
    <location>
        <begin position="1574"/>
        <end position="1724"/>
    </location>
</feature>
<feature type="region of interest" description="Disordered" evidence="8">
    <location>
        <begin position="1742"/>
        <end position="1829"/>
    </location>
</feature>
<feature type="coiled-coil region" evidence="4">
    <location>
        <begin position="146"/>
        <end position="186"/>
    </location>
</feature>
<feature type="coiled-coil region" evidence="4">
    <location>
        <begin position="1417"/>
        <end position="1454"/>
    </location>
</feature>
<feature type="coiled-coil region" evidence="4">
    <location>
        <begin position="1530"/>
        <end position="1564"/>
    </location>
</feature>
<feature type="coiled-coil region" evidence="4">
    <location>
        <begin position="1600"/>
        <end position="1672"/>
    </location>
</feature>
<feature type="compositionally biased region" description="Basic residues" evidence="8">
    <location>
        <begin position="160"/>
        <end position="172"/>
    </location>
</feature>
<feature type="compositionally biased region" description="Basic and acidic residues" evidence="8">
    <location>
        <begin position="173"/>
        <end position="189"/>
    </location>
</feature>
<feature type="compositionally biased region" description="Basic and acidic residues" evidence="8">
    <location>
        <begin position="356"/>
        <end position="371"/>
    </location>
</feature>
<feature type="compositionally biased region" description="Basic and acidic residues" evidence="8">
    <location>
        <begin position="576"/>
        <end position="591"/>
    </location>
</feature>
<feature type="compositionally biased region" description="Basic and acidic residues" evidence="8">
    <location>
        <begin position="1120"/>
        <end position="1135"/>
    </location>
</feature>
<feature type="compositionally biased region" description="Polar residues" evidence="8">
    <location>
        <begin position="1139"/>
        <end position="1150"/>
    </location>
</feature>
<feature type="compositionally biased region" description="Basic and acidic residues" evidence="8">
    <location>
        <begin position="1159"/>
        <end position="1179"/>
    </location>
</feature>
<feature type="compositionally biased region" description="Polar residues" evidence="8">
    <location>
        <begin position="1195"/>
        <end position="1217"/>
    </location>
</feature>
<feature type="compositionally biased region" description="Basic and acidic residues" evidence="8">
    <location>
        <begin position="1300"/>
        <end position="1309"/>
    </location>
</feature>
<feature type="compositionally biased region" description="Low complexity" evidence="8">
    <location>
        <begin position="1316"/>
        <end position="1325"/>
    </location>
</feature>
<feature type="compositionally biased region" description="Polar residues" evidence="8">
    <location>
        <begin position="1332"/>
        <end position="1344"/>
    </location>
</feature>
<feature type="compositionally biased region" description="Pro residues" evidence="8">
    <location>
        <begin position="1371"/>
        <end position="1380"/>
    </location>
</feature>
<feature type="compositionally biased region" description="Low complexity" evidence="8">
    <location>
        <begin position="1401"/>
        <end position="1412"/>
    </location>
</feature>
<feature type="compositionally biased region" description="Basic and acidic residues" evidence="8">
    <location>
        <begin position="1413"/>
        <end position="1447"/>
    </location>
</feature>
<feature type="compositionally biased region" description="Polar residues" evidence="8">
    <location>
        <begin position="1450"/>
        <end position="1464"/>
    </location>
</feature>
<feature type="compositionally biased region" description="Basic and acidic residues" evidence="8">
    <location>
        <begin position="1494"/>
        <end position="1510"/>
    </location>
</feature>
<feature type="compositionally biased region" description="Basic and acidic residues" evidence="8">
    <location>
        <begin position="1520"/>
        <end position="1533"/>
    </location>
</feature>
<feature type="compositionally biased region" description="Acidic residues" evidence="8">
    <location>
        <begin position="1583"/>
        <end position="1594"/>
    </location>
</feature>
<feature type="compositionally biased region" description="Basic and acidic residues" evidence="8">
    <location>
        <begin position="1602"/>
        <end position="1682"/>
    </location>
</feature>
<feature type="compositionally biased region" description="Polar residues" evidence="8">
    <location>
        <begin position="1715"/>
        <end position="1724"/>
    </location>
</feature>
<feature type="compositionally biased region" description="Polar residues" evidence="8">
    <location>
        <begin position="1753"/>
        <end position="1764"/>
    </location>
</feature>
<feature type="compositionally biased region" description="Basic and acidic residues" evidence="8">
    <location>
        <begin position="1768"/>
        <end position="1781"/>
    </location>
</feature>
<feature type="compositionally biased region" description="Basic and acidic residues" evidence="8">
    <location>
        <begin position="1809"/>
        <end position="1829"/>
    </location>
</feature>
<feature type="modified residue" description="Phosphoserine" evidence="2">
    <location>
        <position position="216"/>
    </location>
</feature>
<feature type="modified residue" description="Phosphoserine" evidence="2">
    <location>
        <position position="246"/>
    </location>
</feature>
<feature type="modified residue" description="Phosphoserine" evidence="2">
    <location>
        <position position="256"/>
    </location>
</feature>
<feature type="modified residue" description="Phosphoserine" evidence="13">
    <location>
        <position position="391"/>
    </location>
</feature>
<feature type="modified residue" description="Phosphoserine" evidence="2">
    <location>
        <position position="424"/>
    </location>
</feature>
<feature type="modified residue" description="Phosphoserine" evidence="13">
    <location>
        <position position="512"/>
    </location>
</feature>
<feature type="modified residue" description="Phosphoserine" evidence="2">
    <location>
        <position position="557"/>
    </location>
</feature>
<feature type="modified residue" description="Phosphoserine" evidence="2">
    <location>
        <position position="562"/>
    </location>
</feature>
<feature type="modified residue" description="Phosphoserine" evidence="2">
    <location>
        <position position="589"/>
    </location>
</feature>
<feature type="modified residue" description="Phosphoserine" evidence="2">
    <location>
        <position position="655"/>
    </location>
</feature>
<feature type="modified residue" description="Phosphoserine" evidence="13">
    <location>
        <position position="1090"/>
    </location>
</feature>
<feature type="modified residue" description="Phosphoserine" evidence="13">
    <location>
        <position position="1114"/>
    </location>
</feature>
<feature type="modified residue" description="Phosphoserine" evidence="3">
    <location>
        <position position="1133"/>
    </location>
</feature>
<feature type="modified residue" description="Phosphoserine" evidence="13">
    <location>
        <position position="1147"/>
    </location>
</feature>
<feature type="modified residue" description="Phosphoserine" evidence="13">
    <location>
        <position position="1150"/>
    </location>
</feature>
<feature type="modified residue" description="Phosphoserine" evidence="3">
    <location>
        <position position="1179"/>
    </location>
</feature>
<feature type="modified residue" description="Phosphoserine" evidence="2">
    <location>
        <position position="1180"/>
    </location>
</feature>
<feature type="modified residue" description="Phosphoserine" evidence="13">
    <location>
        <position position="1189"/>
    </location>
</feature>
<feature type="modified residue" description="Phosphoserine" evidence="2">
    <location>
        <position position="1206"/>
    </location>
</feature>
<feature type="modified residue" description="Phosphothreonine" evidence="2">
    <location>
        <position position="1218"/>
    </location>
</feature>
<feature type="modified residue" description="Phosphothreonine" evidence="2">
    <location>
        <position position="1239"/>
    </location>
</feature>
<feature type="modified residue" description="Phosphoserine" evidence="2">
    <location>
        <position position="1245"/>
    </location>
</feature>
<feature type="modified residue" description="Phosphoserine" evidence="13">
    <location>
        <position position="1282"/>
    </location>
</feature>
<feature type="modified residue" description="Phosphoserine" evidence="2">
    <location>
        <position position="1335"/>
    </location>
</feature>
<feature type="modified residue" description="Phosphothreonine" evidence="2">
    <location>
        <position position="1337"/>
    </location>
</feature>
<feature type="modified residue" description="Phosphoserine" evidence="13">
    <location>
        <position position="1506"/>
    </location>
</feature>
<feature type="modified residue" description="Phosphoserine" evidence="13">
    <location>
        <position position="1517"/>
    </location>
</feature>
<feature type="modified residue" description="Phosphoserine" evidence="2">
    <location>
        <position position="1701"/>
    </location>
</feature>
<feature type="modified residue" description="Phosphoserine" evidence="13">
    <location>
        <position position="1726"/>
    </location>
</feature>
<feature type="modified residue" description="Phosphoserine" evidence="13">
    <location>
        <position position="1779"/>
    </location>
</feature>
<feature type="modified residue" description="Phosphoserine" evidence="13">
    <location>
        <position position="1804"/>
    </location>
</feature>
<feature type="modified residue" description="N6-acetyllysine" evidence="3">
    <location>
        <position position="1812"/>
    </location>
</feature>
<feature type="splice variant" id="VSP_011726" description="In isoform 2." evidence="11">
    <location>
        <begin position="679"/>
        <end position="685"/>
    </location>
</feature>
<feature type="splice variant" id="VSP_011727" description="In isoform 2." evidence="11">
    <original>R</original>
    <variation>RQTAMPAISVLDL</variation>
    <location>
        <position position="1609"/>
    </location>
</feature>
<feature type="splice variant" id="VSP_011728" description="In isoform 2." evidence="11">
    <original>RRQE</original>
    <variation>VMVL</variation>
    <location>
        <begin position="1655"/>
        <end position="1658"/>
    </location>
</feature>
<feature type="splice variant" id="VSP_011729" description="In isoform 2." evidence="11">
    <location>
        <begin position="1659"/>
        <end position="1829"/>
    </location>
</feature>
<gene>
    <name evidence="12" type="primary">Afdn</name>
    <name type="synonym">Af6</name>
    <name type="synonym">Mllt4</name>
</gene>
<evidence type="ECO:0000250" key="1"/>
<evidence type="ECO:0000250" key="2">
    <source>
        <dbReference type="UniProtKB" id="P55196"/>
    </source>
</evidence>
<evidence type="ECO:0000250" key="3">
    <source>
        <dbReference type="UniProtKB" id="Q9QZQ1"/>
    </source>
</evidence>
<evidence type="ECO:0000255" key="4"/>
<evidence type="ECO:0000255" key="5">
    <source>
        <dbReference type="PROSITE-ProRule" id="PRU00143"/>
    </source>
</evidence>
<evidence type="ECO:0000255" key="6">
    <source>
        <dbReference type="PROSITE-ProRule" id="PRU00166"/>
    </source>
</evidence>
<evidence type="ECO:0000255" key="7">
    <source>
        <dbReference type="PROSITE-ProRule" id="PRU00503"/>
    </source>
</evidence>
<evidence type="ECO:0000256" key="8">
    <source>
        <dbReference type="SAM" id="MobiDB-lite"/>
    </source>
</evidence>
<evidence type="ECO:0000269" key="9">
    <source>
    </source>
</evidence>
<evidence type="ECO:0000269" key="10">
    <source>
    </source>
</evidence>
<evidence type="ECO:0000303" key="11">
    <source>
    </source>
</evidence>
<evidence type="ECO:0000312" key="12">
    <source>
        <dbReference type="RGD" id="708561"/>
    </source>
</evidence>
<evidence type="ECO:0007744" key="13">
    <source>
    </source>
</evidence>
<sequence>MSAGGRDEERRKLADIIHHWNANRLDLFEISQPTEDLEFHGVMRFYFQDKAAGNFATKCIRVSSTATTQDVIETLAEKFRPDMRMLSSPKYSLYEVHVSGERRLDIDEKPLVVQLNWNKDDREGRFVLKNENDAIPAKKAQSNGPEKQEKEGVIQNFKRTLSKKEKKEKKKREKEALRQASDKEERPSQGDDSENSRLAAEVYKDMPETSFTRTISNPEVVMKRRRQQKLEKRMQEFRSSDGRPDSGGTLRIYADSLKPNIPYKTILLSTTDPADFAVAESLEKYGLEKENPKDYCIARVMLPPGAQHSDERGAKEIILDDDECPLQIFREWPSDKGILVFQLKRRPPDYIPKKMKKHVEGKPLKGKDRADGSGYGSALPPEKLPYLVELSPGRRNHFAYYSYHTYEDGSDSRDKPKLYRLQLSVTEVGTEKFDDNSIQLFGPGIQPHHCDLTNMDGVVTVTPRSMDAETYVDGQRISETTMLQSGMRLQFGTSHVFKFVDPIQDHVLSKRSVDGGLMVKGPRHKPGAVQETTFELGGDIHSGTALPASRSTTRLDSDRVSSASSTAERGMVKPMIRLDQEQDYRRRESRTQDAAGPELMLPASIEFRESSEDSFLSAIINYTNSSTVHFKLSPTYVLYMACRYVLSSQHRPDISPTERTHKAIAVVNKMVSMMEGVIQEVDQVDQKQKNIAGALAFWMANASELLNFIKQDRDLSRITLDAQDVLAHLVQMAFKYLVHCLQSELNNYMPAFLDDPEENSLQRPKIDDVLHTLTGAMSLLRRCRVNAALTIQLFSQLFHFINMWLFNRLVTDPDSGLCSHYWGAIIRQQLGHIEAWAEKQGLELAADCHLSRIVQATTLLTMDKYVPDDIPNINSTCFKLNSLQLQALLQNYHCAPDEPFIPTDLIENVVAVAENTADELARSDGRDVQLEEDPDLQLPFLLPEDGYSCDVVRNIPNGLQEFLDPLCQRGFCRLVPHTRSPGTWTIYFEGADYESHLMRENTELTQPLRKEPEVITVTLKKQNGMGLSIVAAKGAGQDKLGIYVKSVVKGGAADVDGRLAAGDQLLSVDGRSLVGLSQERAAELMTRTSSVVTLEVAKQGAIYHGLATLLNQPSPMMQRISDRRGSGKPRPKSEGFELYNNSAQNGSPESPQMPWTEYSEPKKLPGDDRLMKNRADHRSSPNVANQPPSPGGKSPYTSGTAAKITSVSTGNLCTEEQTPPPRPEAYPIPTQTYTREYFTFPASKSQDRMAPVQNQWPNYEEKPHMHTESDHASIAIQRVTRSQEELREEKVYQLERHRVESGMDRKCDSDMWINQSSSVESSTSSQEHLNHSSKSVTPASTLTKSGPGRWKTPAAVLPTPVAVSQPIRTDLPPPPPPPPAHYTSDFDGISMDLPLPPPPANQAAPQSAQVAAAERKKREEHQRWYEKEKARLEEERERKRREQERKLGQMRTQSLNPASFSPLATQAKPEKPSTLQRPQETVIRELQPQQQPRTIERRDLQYITISKEELSSGDSLSPDPWKRDAREKLEKQQQMHIVDMLSKEIHELQNKGDRTAEESDRLRKLMLEWQFQKRLQESKQKDEDDDEEEDDDVDTMLIMQRLEAERRARLQDEERRRQQQLEEMRKREVEDRVRQEEDGRHQEEERVKRDAEEKRRQEEGYYSRLEAERRRQHEEAARRLLEPEEPGLSRPPLPQDYEPPSQSSAPSAPPPPPQRNASYLKTQVLSPDSLFTAKFVAYDDDDEEENYVPAGPNSYSGSAGTTAGTYDAPRDTREKLSRSQDADLPGSSGAPENLTFRERQRLFSQGQDVSDKVKASRKLTELENELNTK</sequence>
<comment type="function">
    <text evidence="2 3 10">Belongs to an adhesion system, probably together with the E-cadherin-catenin system, which plays a role in the organization of homotypic, interneuronal and heterotypic cell-cell adherens junctions (AJs) (PubMed:9334353). Nectin- and actin-filament-binding protein that connects nectin to the actin cytoskeleton (PubMed:9334353). May play a key role in the organization of epithelial structures of the embryonic ectoderm (By similarity). Essential for the organization of adherens junctions (By similarity).</text>
</comment>
<comment type="subunit">
    <text evidence="1 9">Homodimer. Interacts with F-actin, nectin and NECTIN3. Essential for the association of nectin and E-cadherin. Isoform 2/s-afadin does not interact with F-actin. Interacts with ZO-1 and occludin, but probably in an indirect manner. Interacts with RIT1, RIT2, NRXN1 and BCR (By similarity). Interacts with ADAM10; the interaction locks ADAM10 at adherens junctions following ADAM10 recruitment to adherens junctions by TSPAN33 (PubMed:30463011).</text>
</comment>
<comment type="interaction">
    <interactant intactId="EBI-6654073">
        <id>O35889</id>
    </interactant>
    <interactant intactId="EBI-647895">
        <id>P26231</id>
        <label>Ctnna1</label>
    </interactant>
    <organismsDiffer>true</organismsDiffer>
    <experiments>2</experiments>
</comment>
<comment type="interaction">
    <interactant intactId="EBI-6654073">
        <id>O35889</id>
    </interactant>
    <interactant intactId="EBI-351394">
        <id>Q16643</id>
        <label>DBN1</label>
    </interactant>
    <organismsDiffer>true</organismsDiffer>
    <experiments>3</experiments>
</comment>
<comment type="interaction">
    <interactant intactId="EBI-6654073">
        <id>O35889</id>
    </interactant>
    <interactant intactId="EBI-6654049">
        <id>Q8VC66</id>
        <label>Ssx2ip</label>
    </interactant>
    <organismsDiffer>true</organismsDiffer>
    <experiments>4</experiments>
</comment>
<comment type="subcellular location">
    <subcellularLocation>
        <location evidence="10">Cell junction</location>
        <location evidence="10">Adherens junction</location>
    </subcellularLocation>
    <text evidence="10">Not found at cell-matrix AJs.</text>
</comment>
<comment type="alternative products">
    <event type="alternative splicing"/>
    <isoform>
        <id>O35889-1</id>
        <name>1</name>
        <name>l-afadin</name>
        <name>p205</name>
        <sequence type="displayed"/>
    </isoform>
    <isoform>
        <id>O35889-2</id>
        <name>2</name>
        <name>s-afadin</name>
        <name>p190</name>
        <sequence type="described" ref="VSP_011726 VSP_011727 VSP_011728 VSP_011729"/>
    </isoform>
</comment>
<comment type="tissue specificity">
    <text evidence="10">Isoform 1 is widely expressed, including in heart, brain, spleen, lung, liver, skeletal muscle, kidney and testis. Isoform 2 is mainly expressed in the brain.</text>
</comment>
<comment type="miscellaneous">
    <text>Isoform 1 increases the viscosity of F-actin in a dose-dependent manner. Isoform 1 causes F-actin to associate into bundles and meshworks.</text>
</comment>